<organism>
    <name type="scientific">Archaeoglobus fulgidus (strain ATCC 49558 / DSM 4304 / JCM 9628 / NBRC 100126 / VC-16)</name>
    <dbReference type="NCBI Taxonomy" id="224325"/>
    <lineage>
        <taxon>Archaea</taxon>
        <taxon>Methanobacteriati</taxon>
        <taxon>Methanobacteriota</taxon>
        <taxon>Archaeoglobi</taxon>
        <taxon>Archaeoglobales</taxon>
        <taxon>Archaeoglobaceae</taxon>
        <taxon>Archaeoglobus</taxon>
    </lineage>
</organism>
<dbReference type="EMBL" id="AE000782">
    <property type="protein sequence ID" value="AAB90166.1"/>
    <property type="molecule type" value="Genomic_DNA"/>
</dbReference>
<dbReference type="PIR" id="A69385">
    <property type="entry name" value="A69385"/>
</dbReference>
<dbReference type="SMR" id="O29182"/>
<dbReference type="STRING" id="224325.AF_1081"/>
<dbReference type="PaxDb" id="224325-AF_1081"/>
<dbReference type="EnsemblBacteria" id="AAB90166">
    <property type="protein sequence ID" value="AAB90166"/>
    <property type="gene ID" value="AF_1081"/>
</dbReference>
<dbReference type="KEGG" id="afu:AF_1081"/>
<dbReference type="eggNOG" id="arCOG10978">
    <property type="taxonomic scope" value="Archaea"/>
</dbReference>
<dbReference type="HOGENOM" id="CLU_2874925_0_0_2"/>
<dbReference type="Proteomes" id="UP000002199">
    <property type="component" value="Chromosome"/>
</dbReference>
<keyword id="KW-1185">Reference proteome</keyword>
<protein>
    <recommendedName>
        <fullName>Uncharacterized protein AF_1081</fullName>
    </recommendedName>
</protein>
<reference key="1">
    <citation type="journal article" date="1997" name="Nature">
        <title>The complete genome sequence of the hyperthermophilic, sulphate-reducing archaeon Archaeoglobus fulgidus.</title>
        <authorList>
            <person name="Klenk H.-P."/>
            <person name="Clayton R.A."/>
            <person name="Tomb J.-F."/>
            <person name="White O."/>
            <person name="Nelson K.E."/>
            <person name="Ketchum K.A."/>
            <person name="Dodson R.J."/>
            <person name="Gwinn M.L."/>
            <person name="Hickey E.K."/>
            <person name="Peterson J.D."/>
            <person name="Richardson D.L."/>
            <person name="Kerlavage A.R."/>
            <person name="Graham D.E."/>
            <person name="Kyrpides N.C."/>
            <person name="Fleischmann R.D."/>
            <person name="Quackenbush J."/>
            <person name="Lee N.H."/>
            <person name="Sutton G.G."/>
            <person name="Gill S.R."/>
            <person name="Kirkness E.F."/>
            <person name="Dougherty B.A."/>
            <person name="McKenney K."/>
            <person name="Adams M.D."/>
            <person name="Loftus B.J."/>
            <person name="Peterson S.N."/>
            <person name="Reich C.I."/>
            <person name="McNeil L.K."/>
            <person name="Badger J.H."/>
            <person name="Glodek A."/>
            <person name="Zhou L."/>
            <person name="Overbeek R."/>
            <person name="Gocayne J.D."/>
            <person name="Weidman J.F."/>
            <person name="McDonald L.A."/>
            <person name="Utterback T.R."/>
            <person name="Cotton M.D."/>
            <person name="Spriggs T."/>
            <person name="Artiach P."/>
            <person name="Kaine B.P."/>
            <person name="Sykes S.M."/>
            <person name="Sadow P.W."/>
            <person name="D'Andrea K.P."/>
            <person name="Bowman C."/>
            <person name="Fujii C."/>
            <person name="Garland S.A."/>
            <person name="Mason T.M."/>
            <person name="Olsen G.J."/>
            <person name="Fraser C.M."/>
            <person name="Smith H.O."/>
            <person name="Woese C.R."/>
            <person name="Venter J.C."/>
        </authorList>
    </citation>
    <scope>NUCLEOTIDE SEQUENCE [LARGE SCALE GENOMIC DNA]</scope>
    <source>
        <strain>ATCC 49558 / DSM 4304 / JCM 9628 / NBRC 100126 / VC-16</strain>
    </source>
</reference>
<sequence length="57" mass="6688">MDIQVIKQAVREVLREELPSILKEVILSTIPPDEPEADEKQFVDEEINEDDYVKFDE</sequence>
<feature type="chain" id="PRO_0000127960" description="Uncharacterized protein AF_1081">
    <location>
        <begin position="1"/>
        <end position="57"/>
    </location>
</feature>
<gene>
    <name type="ordered locus">AF_1081</name>
</gene>
<accession>O29182</accession>
<name>Y1081_ARCFU</name>
<proteinExistence type="predicted"/>